<sequence length="240" mass="26319">MQPQYQMGYDRAITVFSPDGRLYQVEYAREAVKRGTTAVGIKAHDGVVLIVDKRVSSKLLESSSIEKIFKIDEHIGVASSGLVGDARALVDRARIECQINRVSYDERIEVEALAKKLCDHMQTLTQYGGIRPYGTALLIAGVSDGESRLFETDPSGTLLEYKATGIGIGRPAAMKVFEEEYTADLALKDAILLGLKALHSATEGKFDVDTVEMGIVESSTAQFKKMTKEEVASYVGQFKQ</sequence>
<name>PSA_METB6</name>
<dbReference type="EMBL" id="CP000780">
    <property type="protein sequence ID" value="ABS56338.1"/>
    <property type="molecule type" value="Genomic_DNA"/>
</dbReference>
<dbReference type="RefSeq" id="WP_012107389.1">
    <property type="nucleotide sequence ID" value="NC_009712.1"/>
</dbReference>
<dbReference type="SMR" id="A7I9C7"/>
<dbReference type="STRING" id="456442.Mboo_1822"/>
<dbReference type="GeneID" id="5411038"/>
<dbReference type="KEGG" id="mbn:Mboo_1822"/>
<dbReference type="eggNOG" id="arCOG00971">
    <property type="taxonomic scope" value="Archaea"/>
</dbReference>
<dbReference type="HOGENOM" id="CLU_035750_4_1_2"/>
<dbReference type="OrthoDB" id="9421at2157"/>
<dbReference type="Proteomes" id="UP000002408">
    <property type="component" value="Chromosome"/>
</dbReference>
<dbReference type="GO" id="GO:0005737">
    <property type="term" value="C:cytoplasm"/>
    <property type="evidence" value="ECO:0007669"/>
    <property type="project" value="UniProtKB-SubCell"/>
</dbReference>
<dbReference type="GO" id="GO:0019773">
    <property type="term" value="C:proteasome core complex, alpha-subunit complex"/>
    <property type="evidence" value="ECO:0000250"/>
    <property type="project" value="UniProtKB"/>
</dbReference>
<dbReference type="GO" id="GO:0004298">
    <property type="term" value="F:threonine-type endopeptidase activity"/>
    <property type="evidence" value="ECO:0007669"/>
    <property type="project" value="InterPro"/>
</dbReference>
<dbReference type="GO" id="GO:0010498">
    <property type="term" value="P:proteasomal protein catabolic process"/>
    <property type="evidence" value="ECO:0007669"/>
    <property type="project" value="UniProtKB-UniRule"/>
</dbReference>
<dbReference type="GO" id="GO:0006511">
    <property type="term" value="P:ubiquitin-dependent protein catabolic process"/>
    <property type="evidence" value="ECO:0007669"/>
    <property type="project" value="InterPro"/>
</dbReference>
<dbReference type="CDD" id="cd03756">
    <property type="entry name" value="proteasome_alpha_archeal"/>
    <property type="match status" value="1"/>
</dbReference>
<dbReference type="FunFam" id="3.60.20.10:FF:000004">
    <property type="entry name" value="Proteasome subunit alpha type-4"/>
    <property type="match status" value="1"/>
</dbReference>
<dbReference type="Gene3D" id="3.60.20.10">
    <property type="entry name" value="Glutamine Phosphoribosylpyrophosphate, subunit 1, domain 1"/>
    <property type="match status" value="1"/>
</dbReference>
<dbReference type="HAMAP" id="MF_00289_A">
    <property type="entry name" value="Proteasome_A_A"/>
    <property type="match status" value="1"/>
</dbReference>
<dbReference type="InterPro" id="IPR029055">
    <property type="entry name" value="Ntn_hydrolases_N"/>
</dbReference>
<dbReference type="InterPro" id="IPR050115">
    <property type="entry name" value="Proteasome_alpha"/>
</dbReference>
<dbReference type="InterPro" id="IPR023332">
    <property type="entry name" value="Proteasome_alpha-type"/>
</dbReference>
<dbReference type="InterPro" id="IPR019982">
    <property type="entry name" value="Proteasome_asu_arc"/>
</dbReference>
<dbReference type="InterPro" id="IPR000426">
    <property type="entry name" value="Proteasome_asu_N"/>
</dbReference>
<dbReference type="InterPro" id="IPR001353">
    <property type="entry name" value="Proteasome_sua/b"/>
</dbReference>
<dbReference type="NCBIfam" id="TIGR03633">
    <property type="entry name" value="arc_protsome_A"/>
    <property type="match status" value="1"/>
</dbReference>
<dbReference type="NCBIfam" id="NF003075">
    <property type="entry name" value="PRK03996.1"/>
    <property type="match status" value="1"/>
</dbReference>
<dbReference type="PANTHER" id="PTHR11599">
    <property type="entry name" value="PROTEASOME SUBUNIT ALPHA/BETA"/>
    <property type="match status" value="1"/>
</dbReference>
<dbReference type="Pfam" id="PF00227">
    <property type="entry name" value="Proteasome"/>
    <property type="match status" value="1"/>
</dbReference>
<dbReference type="Pfam" id="PF10584">
    <property type="entry name" value="Proteasome_A_N"/>
    <property type="match status" value="1"/>
</dbReference>
<dbReference type="SMART" id="SM00948">
    <property type="entry name" value="Proteasome_A_N"/>
    <property type="match status" value="1"/>
</dbReference>
<dbReference type="SUPFAM" id="SSF56235">
    <property type="entry name" value="N-terminal nucleophile aminohydrolases (Ntn hydrolases)"/>
    <property type="match status" value="1"/>
</dbReference>
<dbReference type="PROSITE" id="PS00388">
    <property type="entry name" value="PROTEASOME_ALPHA_1"/>
    <property type="match status" value="1"/>
</dbReference>
<dbReference type="PROSITE" id="PS51475">
    <property type="entry name" value="PROTEASOME_ALPHA_2"/>
    <property type="match status" value="1"/>
</dbReference>
<keyword id="KW-0963">Cytoplasm</keyword>
<keyword id="KW-0647">Proteasome</keyword>
<keyword id="KW-1185">Reference proteome</keyword>
<comment type="function">
    <text evidence="1">Component of the proteasome core, a large protease complex with broad specificity involved in protein degradation.</text>
</comment>
<comment type="activity regulation">
    <text evidence="1">The formation of the proteasomal ATPase PAN-20S proteasome complex, via the docking of the C-termini of PAN into the intersubunit pockets in the alpha-rings, triggers opening of the gate for substrate entry. Interconversion between the open-gate and close-gate conformations leads to a dynamic regulation of the 20S proteasome proteolysis activity.</text>
</comment>
<comment type="subunit">
    <text evidence="1">The 20S proteasome core is composed of 14 alpha and 14 beta subunits that assemble into four stacked heptameric rings, resulting in a barrel-shaped structure. The two inner rings, each composed of seven catalytic beta subunits, are sandwiched by two outer rings, each composed of seven alpha subunits. The catalytic chamber with the active sites is on the inside of the barrel. Has a gated structure, the ends of the cylinder being occluded by the N-termini of the alpha-subunits. Is capped at one or both ends by the proteasome regulatory ATPase, PAN.</text>
</comment>
<comment type="subcellular location">
    <subcellularLocation>
        <location evidence="1">Cytoplasm</location>
    </subcellularLocation>
</comment>
<comment type="similarity">
    <text evidence="1">Belongs to the peptidase T1A family.</text>
</comment>
<feature type="chain" id="PRO_1000021786" description="Proteasome subunit alpha">
    <location>
        <begin position="1"/>
        <end position="240"/>
    </location>
</feature>
<reference key="1">
    <citation type="journal article" date="2015" name="Microbiology">
        <title>Genome of Methanoregula boonei 6A8 reveals adaptations to oligotrophic peatland environments.</title>
        <authorList>
            <person name="Braeuer S."/>
            <person name="Cadillo-Quiroz H."/>
            <person name="Kyrpides N."/>
            <person name="Woyke T."/>
            <person name="Goodwin L."/>
            <person name="Detter C."/>
            <person name="Podell S."/>
            <person name="Yavitt J.B."/>
            <person name="Zinder S.H."/>
        </authorList>
    </citation>
    <scope>NUCLEOTIDE SEQUENCE [LARGE SCALE GENOMIC DNA]</scope>
    <source>
        <strain>DSM 21154 / JCM 14090 / 6A8</strain>
    </source>
</reference>
<protein>
    <recommendedName>
        <fullName evidence="1">Proteasome subunit alpha</fullName>
    </recommendedName>
    <alternativeName>
        <fullName evidence="1">20S proteasome alpha subunit</fullName>
    </alternativeName>
    <alternativeName>
        <fullName evidence="1">Proteasome core protein PsmA</fullName>
    </alternativeName>
</protein>
<gene>
    <name evidence="1" type="primary">psmA</name>
    <name type="ordered locus">Mboo_1822</name>
</gene>
<evidence type="ECO:0000255" key="1">
    <source>
        <dbReference type="HAMAP-Rule" id="MF_00289"/>
    </source>
</evidence>
<proteinExistence type="inferred from homology"/>
<accession>A7I9C7</accession>
<organism>
    <name type="scientific">Methanoregula boonei (strain DSM 21154 / JCM 14090 / 6A8)</name>
    <dbReference type="NCBI Taxonomy" id="456442"/>
    <lineage>
        <taxon>Archaea</taxon>
        <taxon>Methanobacteriati</taxon>
        <taxon>Methanobacteriota</taxon>
        <taxon>Stenosarchaea group</taxon>
        <taxon>Methanomicrobia</taxon>
        <taxon>Methanomicrobiales</taxon>
        <taxon>Methanoregulaceae</taxon>
        <taxon>Methanoregula</taxon>
    </lineage>
</organism>